<proteinExistence type="inferred from homology"/>
<organism>
    <name type="scientific">Bordetella avium (strain 197N)</name>
    <dbReference type="NCBI Taxonomy" id="360910"/>
    <lineage>
        <taxon>Bacteria</taxon>
        <taxon>Pseudomonadati</taxon>
        <taxon>Pseudomonadota</taxon>
        <taxon>Betaproteobacteria</taxon>
        <taxon>Burkholderiales</taxon>
        <taxon>Alcaligenaceae</taxon>
        <taxon>Bordetella</taxon>
    </lineage>
</organism>
<name>PNP_BORA1</name>
<accession>Q2KWI6</accession>
<keyword id="KW-0963">Cytoplasm</keyword>
<keyword id="KW-0460">Magnesium</keyword>
<keyword id="KW-0479">Metal-binding</keyword>
<keyword id="KW-0548">Nucleotidyltransferase</keyword>
<keyword id="KW-1185">Reference proteome</keyword>
<keyword id="KW-0694">RNA-binding</keyword>
<keyword id="KW-0808">Transferase</keyword>
<comment type="function">
    <text evidence="1">Involved in mRNA degradation. Catalyzes the phosphorolysis of single-stranded polyribonucleotides processively in the 3'- to 5'-direction.</text>
</comment>
<comment type="catalytic activity">
    <reaction evidence="1">
        <text>RNA(n+1) + phosphate = RNA(n) + a ribonucleoside 5'-diphosphate</text>
        <dbReference type="Rhea" id="RHEA:22096"/>
        <dbReference type="Rhea" id="RHEA-COMP:14527"/>
        <dbReference type="Rhea" id="RHEA-COMP:17342"/>
        <dbReference type="ChEBI" id="CHEBI:43474"/>
        <dbReference type="ChEBI" id="CHEBI:57930"/>
        <dbReference type="ChEBI" id="CHEBI:140395"/>
        <dbReference type="EC" id="2.7.7.8"/>
    </reaction>
</comment>
<comment type="cofactor">
    <cofactor evidence="1">
        <name>Mg(2+)</name>
        <dbReference type="ChEBI" id="CHEBI:18420"/>
    </cofactor>
</comment>
<comment type="subcellular location">
    <subcellularLocation>
        <location evidence="1">Cytoplasm</location>
    </subcellularLocation>
</comment>
<comment type="similarity">
    <text evidence="1">Belongs to the polyribonucleotide nucleotidyltransferase family.</text>
</comment>
<evidence type="ECO:0000255" key="1">
    <source>
        <dbReference type="HAMAP-Rule" id="MF_01595"/>
    </source>
</evidence>
<sequence>MFNKVTKTFQYGQHTVVLETGEIARQASGAVLVSVEDTVVLATVVAAKKAKPGQDFFPLTVDYIEKTYAAGRIPGGFFKREGKPSEKETLTSRLIDRPLRPLFPEGFYNEVQVVIHTLSVNPEIDPDIPAMIGASAALAISGIPFNGPIGAARVAYVEGQYLLNPTASQLKSSKMDLVVAGTENAVLMVESEAQQLSEEIMLGGVVFGHEQMQAAINAIHDLVRDAGKPEWTWSPAAKNEALIAAVTAAAQEGLSAAYQIREKQARTTKLREVYAEVSAKLAEQAAAAGQDAPDGVTVDNILFDLEARLVRSQILNGEPRIDGRDTRTVRPISVRLGVLPRAHGSALFTRGETQALVVATLGTKQDEQIIDALMGEYRDRFMLHYNMPPFATGETGRIGVPKRREIGHGRLAKRSLVPVLPKPEDFQYTIRIVSEITESNGSSSMASVCGGSLAMMDAGVPITDHVAGVAMGLILENGKFAVLTDILGDEDHLGDMDFKVAGTENGITALQMDIKIQGITKEIMQVALAQAREGRLHILGKMRESLDGSRTELSAFAPRMLTIKINPEKIRDVIGKGGATIRALTEETGTQIDISDDGTIVIASVDEGQAKEAQRRIVELTADVEVGQVYDGSVLRLLDFGAIVQVLPGRDGLLHISEIANYRIANINDVLKVGQQVRVKVIEADEKGRLRLSVKAIGGIEQQQAAADVPAQAETPAE</sequence>
<gene>
    <name evidence="1" type="primary">pnp</name>
    <name type="ordered locus">BAV2667</name>
</gene>
<protein>
    <recommendedName>
        <fullName evidence="1">Polyribonucleotide nucleotidyltransferase</fullName>
        <ecNumber evidence="1">2.7.7.8</ecNumber>
    </recommendedName>
    <alternativeName>
        <fullName evidence="1">Polynucleotide phosphorylase</fullName>
        <shortName evidence="1">PNPase</shortName>
    </alternativeName>
</protein>
<feature type="chain" id="PRO_0000329535" description="Polyribonucleotide nucleotidyltransferase">
    <location>
        <begin position="1"/>
        <end position="718"/>
    </location>
</feature>
<feature type="domain" description="KH" evidence="1">
    <location>
        <begin position="558"/>
        <end position="617"/>
    </location>
</feature>
<feature type="domain" description="S1 motif" evidence="1">
    <location>
        <begin position="627"/>
        <end position="695"/>
    </location>
</feature>
<feature type="binding site" evidence="1">
    <location>
        <position position="491"/>
    </location>
    <ligand>
        <name>Mg(2+)</name>
        <dbReference type="ChEBI" id="CHEBI:18420"/>
    </ligand>
</feature>
<feature type="binding site" evidence="1">
    <location>
        <position position="497"/>
    </location>
    <ligand>
        <name>Mg(2+)</name>
        <dbReference type="ChEBI" id="CHEBI:18420"/>
    </ligand>
</feature>
<reference key="1">
    <citation type="journal article" date="2006" name="J. Bacteriol.">
        <title>Comparison of the genome sequence of the poultry pathogen Bordetella avium with those of B. bronchiseptica, B. pertussis, and B. parapertussis reveals extensive diversity in surface structures associated with host interaction.</title>
        <authorList>
            <person name="Sebaihia M."/>
            <person name="Preston A."/>
            <person name="Maskell D.J."/>
            <person name="Kuzmiak H."/>
            <person name="Connell T.D."/>
            <person name="King N.D."/>
            <person name="Orndorff P.E."/>
            <person name="Miyamoto D.M."/>
            <person name="Thomson N.R."/>
            <person name="Harris D."/>
            <person name="Goble A."/>
            <person name="Lord A."/>
            <person name="Murphy L."/>
            <person name="Quail M.A."/>
            <person name="Rutter S."/>
            <person name="Squares R."/>
            <person name="Squares S."/>
            <person name="Woodward J."/>
            <person name="Parkhill J."/>
            <person name="Temple L.M."/>
        </authorList>
    </citation>
    <scope>NUCLEOTIDE SEQUENCE [LARGE SCALE GENOMIC DNA]</scope>
    <source>
        <strain>197N</strain>
    </source>
</reference>
<dbReference type="EC" id="2.7.7.8" evidence="1"/>
<dbReference type="EMBL" id="AM167904">
    <property type="protein sequence ID" value="CAJ50278.1"/>
    <property type="molecule type" value="Genomic_DNA"/>
</dbReference>
<dbReference type="RefSeq" id="WP_012418310.1">
    <property type="nucleotide sequence ID" value="NC_010645.1"/>
</dbReference>
<dbReference type="SMR" id="Q2KWI6"/>
<dbReference type="STRING" id="360910.BAV2667"/>
<dbReference type="KEGG" id="bav:BAV2667"/>
<dbReference type="eggNOG" id="COG1185">
    <property type="taxonomic scope" value="Bacteria"/>
</dbReference>
<dbReference type="HOGENOM" id="CLU_004217_2_2_4"/>
<dbReference type="OrthoDB" id="9804305at2"/>
<dbReference type="Proteomes" id="UP000001977">
    <property type="component" value="Chromosome"/>
</dbReference>
<dbReference type="GO" id="GO:0005829">
    <property type="term" value="C:cytosol"/>
    <property type="evidence" value="ECO:0007669"/>
    <property type="project" value="TreeGrafter"/>
</dbReference>
<dbReference type="GO" id="GO:0000175">
    <property type="term" value="F:3'-5'-RNA exonuclease activity"/>
    <property type="evidence" value="ECO:0007669"/>
    <property type="project" value="TreeGrafter"/>
</dbReference>
<dbReference type="GO" id="GO:0000287">
    <property type="term" value="F:magnesium ion binding"/>
    <property type="evidence" value="ECO:0007669"/>
    <property type="project" value="UniProtKB-UniRule"/>
</dbReference>
<dbReference type="GO" id="GO:0004654">
    <property type="term" value="F:polyribonucleotide nucleotidyltransferase activity"/>
    <property type="evidence" value="ECO:0007669"/>
    <property type="project" value="UniProtKB-UniRule"/>
</dbReference>
<dbReference type="GO" id="GO:0003723">
    <property type="term" value="F:RNA binding"/>
    <property type="evidence" value="ECO:0007669"/>
    <property type="project" value="UniProtKB-UniRule"/>
</dbReference>
<dbReference type="GO" id="GO:0006402">
    <property type="term" value="P:mRNA catabolic process"/>
    <property type="evidence" value="ECO:0007669"/>
    <property type="project" value="UniProtKB-UniRule"/>
</dbReference>
<dbReference type="GO" id="GO:0006396">
    <property type="term" value="P:RNA processing"/>
    <property type="evidence" value="ECO:0007669"/>
    <property type="project" value="InterPro"/>
</dbReference>
<dbReference type="CDD" id="cd02393">
    <property type="entry name" value="KH-I_PNPase"/>
    <property type="match status" value="1"/>
</dbReference>
<dbReference type="CDD" id="cd11363">
    <property type="entry name" value="RNase_PH_PNPase_1"/>
    <property type="match status" value="1"/>
</dbReference>
<dbReference type="CDD" id="cd11364">
    <property type="entry name" value="RNase_PH_PNPase_2"/>
    <property type="match status" value="1"/>
</dbReference>
<dbReference type="CDD" id="cd04472">
    <property type="entry name" value="S1_PNPase"/>
    <property type="match status" value="1"/>
</dbReference>
<dbReference type="FunFam" id="3.30.1370.10:FF:000001">
    <property type="entry name" value="Polyribonucleotide nucleotidyltransferase"/>
    <property type="match status" value="1"/>
</dbReference>
<dbReference type="FunFam" id="3.30.230.70:FF:000001">
    <property type="entry name" value="Polyribonucleotide nucleotidyltransferase"/>
    <property type="match status" value="1"/>
</dbReference>
<dbReference type="FunFam" id="3.30.230.70:FF:000002">
    <property type="entry name" value="Polyribonucleotide nucleotidyltransferase"/>
    <property type="match status" value="1"/>
</dbReference>
<dbReference type="FunFam" id="2.40.50.140:FF:000189">
    <property type="entry name" value="Polyribonucleotide nucleotidyltransferase, putative"/>
    <property type="match status" value="1"/>
</dbReference>
<dbReference type="Gene3D" id="3.30.230.70">
    <property type="entry name" value="GHMP Kinase, N-terminal domain"/>
    <property type="match status" value="2"/>
</dbReference>
<dbReference type="Gene3D" id="3.30.1370.10">
    <property type="entry name" value="K Homology domain, type 1"/>
    <property type="match status" value="1"/>
</dbReference>
<dbReference type="Gene3D" id="2.40.50.140">
    <property type="entry name" value="Nucleic acid-binding proteins"/>
    <property type="match status" value="1"/>
</dbReference>
<dbReference type="HAMAP" id="MF_01595">
    <property type="entry name" value="PNPase"/>
    <property type="match status" value="1"/>
</dbReference>
<dbReference type="InterPro" id="IPR001247">
    <property type="entry name" value="ExoRNase_PH_dom1"/>
</dbReference>
<dbReference type="InterPro" id="IPR015847">
    <property type="entry name" value="ExoRNase_PH_dom2"/>
</dbReference>
<dbReference type="InterPro" id="IPR036345">
    <property type="entry name" value="ExoRNase_PH_dom2_sf"/>
</dbReference>
<dbReference type="InterPro" id="IPR004087">
    <property type="entry name" value="KH_dom"/>
</dbReference>
<dbReference type="InterPro" id="IPR004088">
    <property type="entry name" value="KH_dom_type_1"/>
</dbReference>
<dbReference type="InterPro" id="IPR036612">
    <property type="entry name" value="KH_dom_type_1_sf"/>
</dbReference>
<dbReference type="InterPro" id="IPR012340">
    <property type="entry name" value="NA-bd_OB-fold"/>
</dbReference>
<dbReference type="InterPro" id="IPR012162">
    <property type="entry name" value="PNPase"/>
</dbReference>
<dbReference type="InterPro" id="IPR027408">
    <property type="entry name" value="PNPase/RNase_PH_dom_sf"/>
</dbReference>
<dbReference type="InterPro" id="IPR015848">
    <property type="entry name" value="PNPase_PH_RNA-bd_bac/org-type"/>
</dbReference>
<dbReference type="InterPro" id="IPR036456">
    <property type="entry name" value="PNPase_PH_RNA-bd_sf"/>
</dbReference>
<dbReference type="InterPro" id="IPR020568">
    <property type="entry name" value="Ribosomal_Su5_D2-typ_SF"/>
</dbReference>
<dbReference type="InterPro" id="IPR003029">
    <property type="entry name" value="S1_domain"/>
</dbReference>
<dbReference type="NCBIfam" id="TIGR03591">
    <property type="entry name" value="polynuc_phos"/>
    <property type="match status" value="1"/>
</dbReference>
<dbReference type="NCBIfam" id="NF008805">
    <property type="entry name" value="PRK11824.1"/>
    <property type="match status" value="1"/>
</dbReference>
<dbReference type="PANTHER" id="PTHR11252">
    <property type="entry name" value="POLYRIBONUCLEOTIDE NUCLEOTIDYLTRANSFERASE"/>
    <property type="match status" value="1"/>
</dbReference>
<dbReference type="PANTHER" id="PTHR11252:SF0">
    <property type="entry name" value="POLYRIBONUCLEOTIDE NUCLEOTIDYLTRANSFERASE 1, MITOCHONDRIAL"/>
    <property type="match status" value="1"/>
</dbReference>
<dbReference type="Pfam" id="PF00013">
    <property type="entry name" value="KH_1"/>
    <property type="match status" value="1"/>
</dbReference>
<dbReference type="Pfam" id="PF03726">
    <property type="entry name" value="PNPase"/>
    <property type="match status" value="1"/>
</dbReference>
<dbReference type="Pfam" id="PF01138">
    <property type="entry name" value="RNase_PH"/>
    <property type="match status" value="2"/>
</dbReference>
<dbReference type="Pfam" id="PF03725">
    <property type="entry name" value="RNase_PH_C"/>
    <property type="match status" value="2"/>
</dbReference>
<dbReference type="Pfam" id="PF00575">
    <property type="entry name" value="S1"/>
    <property type="match status" value="1"/>
</dbReference>
<dbReference type="PIRSF" id="PIRSF005499">
    <property type="entry name" value="PNPase"/>
    <property type="match status" value="1"/>
</dbReference>
<dbReference type="SMART" id="SM00322">
    <property type="entry name" value="KH"/>
    <property type="match status" value="1"/>
</dbReference>
<dbReference type="SMART" id="SM00316">
    <property type="entry name" value="S1"/>
    <property type="match status" value="1"/>
</dbReference>
<dbReference type="SUPFAM" id="SSF54791">
    <property type="entry name" value="Eukaryotic type KH-domain (KH-domain type I)"/>
    <property type="match status" value="1"/>
</dbReference>
<dbReference type="SUPFAM" id="SSF50249">
    <property type="entry name" value="Nucleic acid-binding proteins"/>
    <property type="match status" value="1"/>
</dbReference>
<dbReference type="SUPFAM" id="SSF46915">
    <property type="entry name" value="Polynucleotide phosphorylase/guanosine pentaphosphate synthase (PNPase/GPSI), domain 3"/>
    <property type="match status" value="1"/>
</dbReference>
<dbReference type="SUPFAM" id="SSF55666">
    <property type="entry name" value="Ribonuclease PH domain 2-like"/>
    <property type="match status" value="2"/>
</dbReference>
<dbReference type="SUPFAM" id="SSF54211">
    <property type="entry name" value="Ribosomal protein S5 domain 2-like"/>
    <property type="match status" value="2"/>
</dbReference>
<dbReference type="PROSITE" id="PS50084">
    <property type="entry name" value="KH_TYPE_1"/>
    <property type="match status" value="1"/>
</dbReference>
<dbReference type="PROSITE" id="PS50126">
    <property type="entry name" value="S1"/>
    <property type="match status" value="1"/>
</dbReference>